<sequence>MTATAPITQDVRTFPRKLPDGPVNLIGLTRDGLRAALIEAGTPEKQAKMRTGQIWQWLYQKGVRDFASMTNLSKDYRAMLAETFVADVPEVVSRQVSADGTRKYLVRIAGGHEVEVVYIPEVDRGTLCISSQVGCTLTCSFCHTGTQKLVRNLTAGEIIGQVMLARDDLDEWVPTGEGSDAKPRLVSNIVLMGMGEPLYNFENVRDAMKIAMDPEGISLSRRRITLSTSGVVPEIAKTAQEIGCQLAVSFHATTDDVRDKLVPINKRWPIADLLDALRDYPRVSNSERITFEYVMLKDVNDSDADARRLVQLIKGIPAKINLIPFNEWPGAPYERSDWARIEAFADIIYKAGYASPIRTPRGEDIMAACGQLKSATERARKSRKQIEAEAGL</sequence>
<accession>Q28VS6</accession>
<gene>
    <name evidence="1" type="primary">rlmN</name>
    <name type="ordered locus">Jann_0269</name>
</gene>
<comment type="function">
    <text evidence="1">Specifically methylates position 2 of adenine 2503 in 23S rRNA and position 2 of adenine 37 in tRNAs. m2A2503 modification seems to play a crucial role in the proofreading step occurring at the peptidyl transferase center and thus would serve to optimize ribosomal fidelity.</text>
</comment>
<comment type="catalytic activity">
    <reaction evidence="1">
        <text>adenosine(2503) in 23S rRNA + 2 reduced [2Fe-2S]-[ferredoxin] + 2 S-adenosyl-L-methionine = 2-methyladenosine(2503) in 23S rRNA + 5'-deoxyadenosine + L-methionine + 2 oxidized [2Fe-2S]-[ferredoxin] + S-adenosyl-L-homocysteine</text>
        <dbReference type="Rhea" id="RHEA:42916"/>
        <dbReference type="Rhea" id="RHEA-COMP:10000"/>
        <dbReference type="Rhea" id="RHEA-COMP:10001"/>
        <dbReference type="Rhea" id="RHEA-COMP:10152"/>
        <dbReference type="Rhea" id="RHEA-COMP:10282"/>
        <dbReference type="ChEBI" id="CHEBI:17319"/>
        <dbReference type="ChEBI" id="CHEBI:33737"/>
        <dbReference type="ChEBI" id="CHEBI:33738"/>
        <dbReference type="ChEBI" id="CHEBI:57844"/>
        <dbReference type="ChEBI" id="CHEBI:57856"/>
        <dbReference type="ChEBI" id="CHEBI:59789"/>
        <dbReference type="ChEBI" id="CHEBI:74411"/>
        <dbReference type="ChEBI" id="CHEBI:74497"/>
        <dbReference type="EC" id="2.1.1.192"/>
    </reaction>
</comment>
<comment type="catalytic activity">
    <reaction evidence="1">
        <text>adenosine(37) in tRNA + 2 reduced [2Fe-2S]-[ferredoxin] + 2 S-adenosyl-L-methionine = 2-methyladenosine(37) in tRNA + 5'-deoxyadenosine + L-methionine + 2 oxidized [2Fe-2S]-[ferredoxin] + S-adenosyl-L-homocysteine</text>
        <dbReference type="Rhea" id="RHEA:43332"/>
        <dbReference type="Rhea" id="RHEA-COMP:10000"/>
        <dbReference type="Rhea" id="RHEA-COMP:10001"/>
        <dbReference type="Rhea" id="RHEA-COMP:10162"/>
        <dbReference type="Rhea" id="RHEA-COMP:10485"/>
        <dbReference type="ChEBI" id="CHEBI:17319"/>
        <dbReference type="ChEBI" id="CHEBI:33737"/>
        <dbReference type="ChEBI" id="CHEBI:33738"/>
        <dbReference type="ChEBI" id="CHEBI:57844"/>
        <dbReference type="ChEBI" id="CHEBI:57856"/>
        <dbReference type="ChEBI" id="CHEBI:59789"/>
        <dbReference type="ChEBI" id="CHEBI:74411"/>
        <dbReference type="ChEBI" id="CHEBI:74497"/>
        <dbReference type="EC" id="2.1.1.192"/>
    </reaction>
</comment>
<comment type="cofactor">
    <cofactor evidence="1">
        <name>[4Fe-4S] cluster</name>
        <dbReference type="ChEBI" id="CHEBI:49883"/>
    </cofactor>
    <text evidence="1">Binds 1 [4Fe-4S] cluster. The cluster is coordinated with 3 cysteines and an exchangeable S-adenosyl-L-methionine.</text>
</comment>
<comment type="subcellular location">
    <subcellularLocation>
        <location evidence="1">Cytoplasm</location>
    </subcellularLocation>
</comment>
<comment type="miscellaneous">
    <text evidence="1">Reaction proceeds by a ping-pong mechanism involving intermediate methylation of a conserved cysteine residue.</text>
</comment>
<comment type="similarity">
    <text evidence="1">Belongs to the radical SAM superfamily. RlmN family.</text>
</comment>
<comment type="sequence caution" evidence="3">
    <conflict type="erroneous initiation">
        <sequence resource="EMBL-CDS" id="ABD53186"/>
    </conflict>
</comment>
<feature type="chain" id="PRO_0000350217" description="Dual-specificity RNA methyltransferase RlmN">
    <location>
        <begin position="1"/>
        <end position="392"/>
    </location>
</feature>
<feature type="domain" description="Radical SAM core" evidence="2">
    <location>
        <begin position="121"/>
        <end position="358"/>
    </location>
</feature>
<feature type="active site" description="Proton acceptor" evidence="1">
    <location>
        <position position="115"/>
    </location>
</feature>
<feature type="active site" description="S-methylcysteine intermediate" evidence="1">
    <location>
        <position position="369"/>
    </location>
</feature>
<feature type="binding site" evidence="1">
    <location>
        <position position="135"/>
    </location>
    <ligand>
        <name>[4Fe-4S] cluster</name>
        <dbReference type="ChEBI" id="CHEBI:49883"/>
        <note>4Fe-4S-S-AdoMet</note>
    </ligand>
</feature>
<feature type="binding site" evidence="1">
    <location>
        <position position="139"/>
    </location>
    <ligand>
        <name>[4Fe-4S] cluster</name>
        <dbReference type="ChEBI" id="CHEBI:49883"/>
        <note>4Fe-4S-S-AdoMet</note>
    </ligand>
</feature>
<feature type="binding site" evidence="1">
    <location>
        <position position="142"/>
    </location>
    <ligand>
        <name>[4Fe-4S] cluster</name>
        <dbReference type="ChEBI" id="CHEBI:49883"/>
        <note>4Fe-4S-S-AdoMet</note>
    </ligand>
</feature>
<feature type="binding site" evidence="1">
    <location>
        <begin position="195"/>
        <end position="196"/>
    </location>
    <ligand>
        <name>S-adenosyl-L-methionine</name>
        <dbReference type="ChEBI" id="CHEBI:59789"/>
    </ligand>
</feature>
<feature type="binding site" evidence="1">
    <location>
        <position position="227"/>
    </location>
    <ligand>
        <name>S-adenosyl-L-methionine</name>
        <dbReference type="ChEBI" id="CHEBI:59789"/>
    </ligand>
</feature>
<feature type="binding site" evidence="1">
    <location>
        <begin position="249"/>
        <end position="251"/>
    </location>
    <ligand>
        <name>S-adenosyl-L-methionine</name>
        <dbReference type="ChEBI" id="CHEBI:59789"/>
    </ligand>
</feature>
<feature type="binding site" evidence="1">
    <location>
        <position position="326"/>
    </location>
    <ligand>
        <name>S-adenosyl-L-methionine</name>
        <dbReference type="ChEBI" id="CHEBI:59789"/>
    </ligand>
</feature>
<feature type="disulfide bond" description="(transient)" evidence="1">
    <location>
        <begin position="128"/>
        <end position="369"/>
    </location>
</feature>
<evidence type="ECO:0000255" key="1">
    <source>
        <dbReference type="HAMAP-Rule" id="MF_01849"/>
    </source>
</evidence>
<evidence type="ECO:0000255" key="2">
    <source>
        <dbReference type="PROSITE-ProRule" id="PRU01266"/>
    </source>
</evidence>
<evidence type="ECO:0000305" key="3"/>
<organism>
    <name type="scientific">Jannaschia sp. (strain CCS1)</name>
    <dbReference type="NCBI Taxonomy" id="290400"/>
    <lineage>
        <taxon>Bacteria</taxon>
        <taxon>Pseudomonadati</taxon>
        <taxon>Pseudomonadota</taxon>
        <taxon>Alphaproteobacteria</taxon>
        <taxon>Rhodobacterales</taxon>
        <taxon>Roseobacteraceae</taxon>
        <taxon>Jannaschia</taxon>
    </lineage>
</organism>
<reference key="1">
    <citation type="submission" date="2006-02" db="EMBL/GenBank/DDBJ databases">
        <title>Complete sequence of chromosome of Jannaschia sp. CCS1.</title>
        <authorList>
            <consortium name="US DOE Joint Genome Institute"/>
            <person name="Copeland A."/>
            <person name="Lucas S."/>
            <person name="Lapidus A."/>
            <person name="Barry K."/>
            <person name="Detter J.C."/>
            <person name="Glavina del Rio T."/>
            <person name="Hammon N."/>
            <person name="Israni S."/>
            <person name="Pitluck S."/>
            <person name="Brettin T."/>
            <person name="Bruce D."/>
            <person name="Han C."/>
            <person name="Tapia R."/>
            <person name="Gilna P."/>
            <person name="Chertkov O."/>
            <person name="Saunders E."/>
            <person name="Schmutz J."/>
            <person name="Larimer F."/>
            <person name="Land M."/>
            <person name="Kyrpides N."/>
            <person name="Lykidis A."/>
            <person name="Moran M.A."/>
            <person name="Belas R."/>
            <person name="Ye W."/>
            <person name="Buchan A."/>
            <person name="Gonzalez J.M."/>
            <person name="Schell M.A."/>
            <person name="Richardson P."/>
        </authorList>
    </citation>
    <scope>NUCLEOTIDE SEQUENCE [LARGE SCALE GENOMIC DNA]</scope>
    <source>
        <strain>CCS1</strain>
    </source>
</reference>
<protein>
    <recommendedName>
        <fullName evidence="1">Dual-specificity RNA methyltransferase RlmN</fullName>
        <ecNumber evidence="1">2.1.1.192</ecNumber>
    </recommendedName>
    <alternativeName>
        <fullName evidence="1">23S rRNA (adenine(2503)-C(2))-methyltransferase</fullName>
    </alternativeName>
    <alternativeName>
        <fullName evidence="1">23S rRNA m2A2503 methyltransferase</fullName>
    </alternativeName>
    <alternativeName>
        <fullName evidence="1">Ribosomal RNA large subunit methyltransferase N</fullName>
    </alternativeName>
    <alternativeName>
        <fullName evidence="1">tRNA (adenine(37)-C(2))-methyltransferase</fullName>
    </alternativeName>
    <alternativeName>
        <fullName evidence="1">tRNA m2A37 methyltransferase</fullName>
    </alternativeName>
</protein>
<keyword id="KW-0004">4Fe-4S</keyword>
<keyword id="KW-0963">Cytoplasm</keyword>
<keyword id="KW-1015">Disulfide bond</keyword>
<keyword id="KW-0408">Iron</keyword>
<keyword id="KW-0411">Iron-sulfur</keyword>
<keyword id="KW-0479">Metal-binding</keyword>
<keyword id="KW-0489">Methyltransferase</keyword>
<keyword id="KW-1185">Reference proteome</keyword>
<keyword id="KW-0698">rRNA processing</keyword>
<keyword id="KW-0949">S-adenosyl-L-methionine</keyword>
<keyword id="KW-0808">Transferase</keyword>
<keyword id="KW-0819">tRNA processing</keyword>
<name>RLMN_JANSC</name>
<proteinExistence type="inferred from homology"/>
<dbReference type="EC" id="2.1.1.192" evidence="1"/>
<dbReference type="EMBL" id="CP000264">
    <property type="protein sequence ID" value="ABD53186.1"/>
    <property type="status" value="ALT_INIT"/>
    <property type="molecule type" value="Genomic_DNA"/>
</dbReference>
<dbReference type="RefSeq" id="WP_044006202.1">
    <property type="nucleotide sequence ID" value="NC_007802.1"/>
</dbReference>
<dbReference type="SMR" id="Q28VS6"/>
<dbReference type="STRING" id="290400.Jann_0269"/>
<dbReference type="KEGG" id="jan:Jann_0269"/>
<dbReference type="eggNOG" id="COG0820">
    <property type="taxonomic scope" value="Bacteria"/>
</dbReference>
<dbReference type="HOGENOM" id="CLU_029101_0_0_5"/>
<dbReference type="OrthoDB" id="9793973at2"/>
<dbReference type="Proteomes" id="UP000008326">
    <property type="component" value="Chromosome"/>
</dbReference>
<dbReference type="GO" id="GO:0005737">
    <property type="term" value="C:cytoplasm"/>
    <property type="evidence" value="ECO:0007669"/>
    <property type="project" value="UniProtKB-SubCell"/>
</dbReference>
<dbReference type="GO" id="GO:0051539">
    <property type="term" value="F:4 iron, 4 sulfur cluster binding"/>
    <property type="evidence" value="ECO:0007669"/>
    <property type="project" value="UniProtKB-UniRule"/>
</dbReference>
<dbReference type="GO" id="GO:0046872">
    <property type="term" value="F:metal ion binding"/>
    <property type="evidence" value="ECO:0007669"/>
    <property type="project" value="UniProtKB-KW"/>
</dbReference>
<dbReference type="GO" id="GO:0070040">
    <property type="term" value="F:rRNA (adenine(2503)-C2-)-methyltransferase activity"/>
    <property type="evidence" value="ECO:0007669"/>
    <property type="project" value="UniProtKB-UniRule"/>
</dbReference>
<dbReference type="GO" id="GO:0019843">
    <property type="term" value="F:rRNA binding"/>
    <property type="evidence" value="ECO:0007669"/>
    <property type="project" value="UniProtKB-UniRule"/>
</dbReference>
<dbReference type="GO" id="GO:0002935">
    <property type="term" value="F:tRNA (adenine(37)-C2)-methyltransferase activity"/>
    <property type="evidence" value="ECO:0007669"/>
    <property type="project" value="UniProtKB-UniRule"/>
</dbReference>
<dbReference type="GO" id="GO:0000049">
    <property type="term" value="F:tRNA binding"/>
    <property type="evidence" value="ECO:0007669"/>
    <property type="project" value="UniProtKB-UniRule"/>
</dbReference>
<dbReference type="GO" id="GO:0070475">
    <property type="term" value="P:rRNA base methylation"/>
    <property type="evidence" value="ECO:0007669"/>
    <property type="project" value="UniProtKB-UniRule"/>
</dbReference>
<dbReference type="GO" id="GO:0030488">
    <property type="term" value="P:tRNA methylation"/>
    <property type="evidence" value="ECO:0007669"/>
    <property type="project" value="UniProtKB-UniRule"/>
</dbReference>
<dbReference type="CDD" id="cd01335">
    <property type="entry name" value="Radical_SAM"/>
    <property type="match status" value="1"/>
</dbReference>
<dbReference type="FunFam" id="3.20.20.70:FF:000008">
    <property type="entry name" value="Dual-specificity RNA methyltransferase RlmN"/>
    <property type="match status" value="1"/>
</dbReference>
<dbReference type="Gene3D" id="1.10.150.530">
    <property type="match status" value="1"/>
</dbReference>
<dbReference type="Gene3D" id="3.20.20.70">
    <property type="entry name" value="Aldolase class I"/>
    <property type="match status" value="1"/>
</dbReference>
<dbReference type="HAMAP" id="MF_01849">
    <property type="entry name" value="RNA_methyltr_RlmN"/>
    <property type="match status" value="1"/>
</dbReference>
<dbReference type="InterPro" id="IPR013785">
    <property type="entry name" value="Aldolase_TIM"/>
</dbReference>
<dbReference type="InterPro" id="IPR040072">
    <property type="entry name" value="Methyltransferase_A"/>
</dbReference>
<dbReference type="InterPro" id="IPR048641">
    <property type="entry name" value="RlmN_N"/>
</dbReference>
<dbReference type="InterPro" id="IPR027492">
    <property type="entry name" value="RNA_MTrfase_RlmN"/>
</dbReference>
<dbReference type="InterPro" id="IPR004383">
    <property type="entry name" value="rRNA_lsu_MTrfase_RlmN/Cfr"/>
</dbReference>
<dbReference type="InterPro" id="IPR007197">
    <property type="entry name" value="rSAM"/>
</dbReference>
<dbReference type="NCBIfam" id="TIGR00048">
    <property type="entry name" value="rRNA_mod_RlmN"/>
    <property type="match status" value="1"/>
</dbReference>
<dbReference type="PANTHER" id="PTHR30544">
    <property type="entry name" value="23S RRNA METHYLTRANSFERASE"/>
    <property type="match status" value="1"/>
</dbReference>
<dbReference type="PANTHER" id="PTHR30544:SF5">
    <property type="entry name" value="RADICAL SAM CORE DOMAIN-CONTAINING PROTEIN"/>
    <property type="match status" value="1"/>
</dbReference>
<dbReference type="Pfam" id="PF04055">
    <property type="entry name" value="Radical_SAM"/>
    <property type="match status" value="1"/>
</dbReference>
<dbReference type="Pfam" id="PF21016">
    <property type="entry name" value="RlmN_N"/>
    <property type="match status" value="1"/>
</dbReference>
<dbReference type="PIRSF" id="PIRSF006004">
    <property type="entry name" value="CHP00048"/>
    <property type="match status" value="1"/>
</dbReference>
<dbReference type="SFLD" id="SFLDF00275">
    <property type="entry name" value="adenosine_C2_methyltransferase"/>
    <property type="match status" value="1"/>
</dbReference>
<dbReference type="SFLD" id="SFLDG01062">
    <property type="entry name" value="methyltransferase_(Class_A)"/>
    <property type="match status" value="1"/>
</dbReference>
<dbReference type="SUPFAM" id="SSF102114">
    <property type="entry name" value="Radical SAM enzymes"/>
    <property type="match status" value="1"/>
</dbReference>
<dbReference type="PROSITE" id="PS51918">
    <property type="entry name" value="RADICAL_SAM"/>
    <property type="match status" value="1"/>
</dbReference>